<dbReference type="EMBL" id="DP000182">
    <property type="protein sequence ID" value="ABI93648.1"/>
    <property type="molecule type" value="Genomic_DNA"/>
</dbReference>
<dbReference type="RefSeq" id="XP_058580473.1">
    <property type="nucleotide sequence ID" value="XM_058724490.1"/>
</dbReference>
<dbReference type="SMR" id="Q07E28"/>
<dbReference type="GeneID" id="131509086"/>
<dbReference type="GO" id="GO:0015629">
    <property type="term" value="C:actin cytoskeleton"/>
    <property type="evidence" value="ECO:0007669"/>
    <property type="project" value="TreeGrafter"/>
</dbReference>
<dbReference type="GO" id="GO:0005938">
    <property type="term" value="C:cell cortex"/>
    <property type="evidence" value="ECO:0007669"/>
    <property type="project" value="UniProtKB-SubCell"/>
</dbReference>
<dbReference type="GO" id="GO:0043197">
    <property type="term" value="C:dendritic spine"/>
    <property type="evidence" value="ECO:0000250"/>
    <property type="project" value="UniProtKB"/>
</dbReference>
<dbReference type="GO" id="GO:0090443">
    <property type="term" value="C:FAR/SIN/STRIPAK complex"/>
    <property type="evidence" value="ECO:0000250"/>
    <property type="project" value="UniProtKB"/>
</dbReference>
<dbReference type="GO" id="GO:0051721">
    <property type="term" value="F:protein phosphatase 2A binding"/>
    <property type="evidence" value="ECO:0007669"/>
    <property type="project" value="TreeGrafter"/>
</dbReference>
<dbReference type="CDD" id="cd14686">
    <property type="entry name" value="bZIP"/>
    <property type="match status" value="1"/>
</dbReference>
<dbReference type="Gene3D" id="1.25.40.20">
    <property type="entry name" value="Ankyrin repeat-containing domain"/>
    <property type="match status" value="1"/>
</dbReference>
<dbReference type="InterPro" id="IPR002110">
    <property type="entry name" value="Ankyrin_rpt"/>
</dbReference>
<dbReference type="InterPro" id="IPR036770">
    <property type="entry name" value="Ankyrin_rpt-contain_sf"/>
</dbReference>
<dbReference type="InterPro" id="IPR050719">
    <property type="entry name" value="Cortactin-Actin_Reg"/>
</dbReference>
<dbReference type="InterPro" id="IPR019131">
    <property type="entry name" value="Cortactin-binding_p2_N"/>
</dbReference>
<dbReference type="PANTHER" id="PTHR23166:SF9">
    <property type="entry name" value="CTTNBP2 N-TERMINAL-LIKE PROTEIN"/>
    <property type="match status" value="1"/>
</dbReference>
<dbReference type="PANTHER" id="PTHR23166">
    <property type="entry name" value="FILAMIN/GPBP-INTERACTING PROTEIN"/>
    <property type="match status" value="1"/>
</dbReference>
<dbReference type="Pfam" id="PF25408">
    <property type="entry name" value="AAA_lid_NAV1"/>
    <property type="match status" value="1"/>
</dbReference>
<dbReference type="Pfam" id="PF00023">
    <property type="entry name" value="Ank"/>
    <property type="match status" value="2"/>
</dbReference>
<dbReference type="Pfam" id="PF12796">
    <property type="entry name" value="Ank_2"/>
    <property type="match status" value="1"/>
</dbReference>
<dbReference type="Pfam" id="PF09727">
    <property type="entry name" value="CortBP2"/>
    <property type="match status" value="1"/>
</dbReference>
<dbReference type="SMART" id="SM00248">
    <property type="entry name" value="ANK"/>
    <property type="match status" value="6"/>
</dbReference>
<dbReference type="SUPFAM" id="SSF48403">
    <property type="entry name" value="Ankyrin repeat"/>
    <property type="match status" value="1"/>
</dbReference>
<dbReference type="PROSITE" id="PS50297">
    <property type="entry name" value="ANK_REP_REGION"/>
    <property type="match status" value="1"/>
</dbReference>
<dbReference type="PROSITE" id="PS50088">
    <property type="entry name" value="ANK_REPEAT"/>
    <property type="match status" value="4"/>
</dbReference>
<gene>
    <name type="primary">CTTNBP2</name>
    <name type="synonym">CORTBP2</name>
</gene>
<protein>
    <recommendedName>
        <fullName>Cortactin-binding protein 2</fullName>
        <shortName>CortBP2</shortName>
    </recommendedName>
</protein>
<comment type="function">
    <text evidence="2">Regulates the dendritic spine distribution of CTTN/cortactin in hippocampal neurons, and thus controls dendritic spinogenesis and dendritic spine maintenance. Associates with the striatin-interacting phosphatase and kinase (STRIPAK) core complex to regulate dendritic spine distribution of the STRIPAK complex in hippocampal neurons.</text>
</comment>
<comment type="subunit">
    <text evidence="2">Interacts with CTTN/cortactin SH3 domain. Interacts with STRN, STRN4/zinedin and MOB4/phocein; this interactions mediate the association with the STRIPAK core complex and may regulate dendritic spine distribution of the STRIPAK complex in hippocampal neurons. Activation of glutamate receptors weakens the interaction with STRN and STRN4.</text>
</comment>
<comment type="subcellular location">
    <subcellularLocation>
        <location evidence="1">Cytoplasm</location>
        <location evidence="1">Cell cortex</location>
    </subcellularLocation>
    <subcellularLocation>
        <location evidence="2">Cell projection</location>
        <location evidence="2">Dendritic spine</location>
    </subcellularLocation>
    <text evidence="2">Remains associated with dendritic spines even after glutamate stimulation.</text>
</comment>
<name>CTTB2_NEONE</name>
<feature type="chain" id="PRO_0000260411" description="Cortactin-binding protein 2">
    <location>
        <begin position="1"/>
        <end position="1658"/>
    </location>
</feature>
<feature type="repeat" description="ANK 1">
    <location>
        <begin position="706"/>
        <end position="736"/>
    </location>
</feature>
<feature type="repeat" description="ANK 2">
    <location>
        <begin position="740"/>
        <end position="769"/>
    </location>
</feature>
<feature type="repeat" description="ANK 3">
    <location>
        <begin position="773"/>
        <end position="802"/>
    </location>
</feature>
<feature type="repeat" description="ANK 4">
    <location>
        <begin position="806"/>
        <end position="835"/>
    </location>
</feature>
<feature type="repeat" description="ANK 5">
    <location>
        <begin position="839"/>
        <end position="868"/>
    </location>
</feature>
<feature type="repeat" description="ANK 6">
    <location>
        <begin position="909"/>
        <end position="939"/>
    </location>
</feature>
<feature type="region of interest" description="Disordered" evidence="5">
    <location>
        <begin position="1"/>
        <end position="24"/>
    </location>
</feature>
<feature type="region of interest" description="Disordered" evidence="5">
    <location>
        <begin position="203"/>
        <end position="235"/>
    </location>
</feature>
<feature type="region of interest" description="Disordered" evidence="5">
    <location>
        <begin position="348"/>
        <end position="437"/>
    </location>
</feature>
<feature type="region of interest" description="Disordered" evidence="5">
    <location>
        <begin position="451"/>
        <end position="475"/>
    </location>
</feature>
<feature type="region of interest" description="Disordered" evidence="5">
    <location>
        <begin position="495"/>
        <end position="612"/>
    </location>
</feature>
<feature type="region of interest" description="Disordered" evidence="5">
    <location>
        <begin position="1448"/>
        <end position="1478"/>
    </location>
</feature>
<feature type="region of interest" description="Disordered" evidence="5">
    <location>
        <begin position="1538"/>
        <end position="1595"/>
    </location>
</feature>
<feature type="region of interest" description="Disordered" evidence="5">
    <location>
        <begin position="1611"/>
        <end position="1642"/>
    </location>
</feature>
<feature type="coiled-coil region" evidence="4">
    <location>
        <begin position="119"/>
        <end position="276"/>
    </location>
</feature>
<feature type="compositionally biased region" description="Basic and acidic residues" evidence="5">
    <location>
        <begin position="214"/>
        <end position="235"/>
    </location>
</feature>
<feature type="compositionally biased region" description="Low complexity" evidence="5">
    <location>
        <begin position="385"/>
        <end position="394"/>
    </location>
</feature>
<feature type="compositionally biased region" description="Polar residues" evidence="5">
    <location>
        <begin position="399"/>
        <end position="418"/>
    </location>
</feature>
<feature type="compositionally biased region" description="Low complexity" evidence="5">
    <location>
        <begin position="509"/>
        <end position="520"/>
    </location>
</feature>
<feature type="compositionally biased region" description="Polar residues" evidence="5">
    <location>
        <begin position="580"/>
        <end position="590"/>
    </location>
</feature>
<feature type="compositionally biased region" description="Basic and acidic residues" evidence="5">
    <location>
        <begin position="1539"/>
        <end position="1558"/>
    </location>
</feature>
<feature type="compositionally biased region" description="Polar residues" evidence="5">
    <location>
        <begin position="1559"/>
        <end position="1569"/>
    </location>
</feature>
<feature type="compositionally biased region" description="Polar residues" evidence="5">
    <location>
        <begin position="1581"/>
        <end position="1595"/>
    </location>
</feature>
<feature type="compositionally biased region" description="Low complexity" evidence="5">
    <location>
        <begin position="1619"/>
        <end position="1633"/>
    </location>
</feature>
<feature type="modified residue" description="Asymmetric dimethylarginine" evidence="1">
    <location>
        <position position="495"/>
    </location>
</feature>
<feature type="modified residue" description="Phosphoserine" evidence="3">
    <location>
        <position position="1521"/>
    </location>
</feature>
<proteinExistence type="inferred from homology"/>
<keyword id="KW-0040">ANK repeat</keyword>
<keyword id="KW-0966">Cell projection</keyword>
<keyword id="KW-0175">Coiled coil</keyword>
<keyword id="KW-0963">Cytoplasm</keyword>
<keyword id="KW-0488">Methylation</keyword>
<keyword id="KW-0597">Phosphoprotein</keyword>
<keyword id="KW-0677">Repeat</keyword>
<keyword id="KW-0770">Synapse</keyword>
<reference key="1">
    <citation type="submission" date="2006-09" db="EMBL/GenBank/DDBJ databases">
        <title>NISC comparative sequencing initiative.</title>
        <authorList>
            <person name="Antonellis A."/>
            <person name="Ayele K."/>
            <person name="Benjamin B."/>
            <person name="Blakesley R.W."/>
            <person name="Boakye A."/>
            <person name="Bouffard G.G."/>
            <person name="Brinkley C."/>
            <person name="Brooks S."/>
            <person name="Chu G."/>
            <person name="Coleman H."/>
            <person name="Engle J."/>
            <person name="Gestole M."/>
            <person name="Greene A."/>
            <person name="Guan X."/>
            <person name="Gupta J."/>
            <person name="Haghighi P."/>
            <person name="Han J."/>
            <person name="Hansen N."/>
            <person name="Ho S.-L."/>
            <person name="Hu P."/>
            <person name="Hunter G."/>
            <person name="Hurle B."/>
            <person name="Idol J.R."/>
            <person name="Kwong P."/>
            <person name="Laric P."/>
            <person name="Larson S."/>
            <person name="Lee-Lin S.-Q."/>
            <person name="Legaspi R."/>
            <person name="Madden M."/>
            <person name="Maduro Q.L."/>
            <person name="Maduro V.B."/>
            <person name="Margulies E.H."/>
            <person name="Masiello C."/>
            <person name="Maskeri B."/>
            <person name="McDowell J."/>
            <person name="Mojidi H.A."/>
            <person name="Mullikin J.C."/>
            <person name="Oestreicher J.S."/>
            <person name="Park M."/>
            <person name="Portnoy M.E."/>
            <person name="Prasad A."/>
            <person name="Puri O."/>
            <person name="Reddix-Dugue N."/>
            <person name="Schandler K."/>
            <person name="Schueler M.G."/>
            <person name="Sison C."/>
            <person name="Stantripop S."/>
            <person name="Stephen E."/>
            <person name="Taye A."/>
            <person name="Thomas J.W."/>
            <person name="Thomas P.J."/>
            <person name="Tsipouri V."/>
            <person name="Ung L."/>
            <person name="Vogt J.L."/>
            <person name="Wetherby K.D."/>
            <person name="Young A."/>
            <person name="Green E.D."/>
        </authorList>
    </citation>
    <scope>NUCLEOTIDE SEQUENCE [LARGE SCALE GENOMIC DNA]</scope>
</reference>
<sequence>MATDGASCEPDFSRAPEDAAGATAEAAKKEFDVDTLSKSELRMLLSVMEGELEARDLVIEALRARRKEVFIQERYGRFNLNDPFLALQRDYEAGAGDKEKKPVCTNPLSILEAVMAHCRKMQERMSTQLAAAESRQKKLEMEKLQLQAVEQEHQKLAARLEEERGKNKHVVLMLVKECKQLSGKVIEEAQKLEEVMVKLEEEKTKTSALEEELSAEKRRSTEMEAQMEKQLSEFDTEREQLRAKLHREEAHTTDLKEEIDKMKKMIEQLKRGNDSKPSLSLPRKTKDRRMVSISVGTEGPVTRSVACQTDLVIESTDHVKKLPLTVPVKPSAGSPLVPANTKGNVCTGAALGRPGIDRQASHGDLIGSSPPTVPPPSANRIEENGPSAGSASSTPPLPNSTAPPTVQTPGIAPQSYSQAPPVHSLHSPCANASLHPGLNPRIQAARFRFQGNANDPDQNGNTTQSPPSRDVSPTSRDNLVAKQLARNTVTQALSRFTSPQAGAPPRPGAAPTGDGGTCPPVGRTSLKTPGVARVDRGNPPPIPPKKPGLSQTPSPPHPQLKVIMDSSRASNAGAKVDNKTMASPPSSLPQGNRVINEENLPKSSSPQLPPKPSIDLTVAPAGCAVSALATSQVGAWPAETPGLNQPACSESSLVIPTTIAFCSSINTVSASSCRTGASDSLLVTASGWSPSLTPLLMSGGPAPLAGRPTLLQQAATQGNVTLLSMLLNEEGLDINYSCEDGHSALYSAAKNGHTDCVRLLLNAGAQVNAADTNGFTPLCAAAAQGHFKCVELLISYDANINHAADEGQTPLYLACKNGNKECIQLLLEAGTDRSVKTRDGWTPVHAAVDTGNVDSLKLLMYHRAPACRNSLHEEESESVVFDLDQGEESPEGTSKPVVPAELINHADREGWTAAHIAASKGFKNCLEILCMHGGLEPERKDKCHRTAHDVATDDCKHLLENLNALKIPLRISVGETEPGSYGSDDFECENTICALNIRKQTSWDDFSKAVSQALTNHFQAISSDGWWSLEDVTLNNTTDSSIGLGTSSVRSIMLGNAPWSAGQSFTQSPWDFMKKNKAERVTVLLSGPQEGCLSSVTYASMIPLQMLQNYLRLVEQYHNVIFHGPEGSLQDYIAHQLALCMKHRQMAAGFTCEIVRAEVDAGFSKEQLIDLFINSACLIPVKQSPVNKKIIIILENLEKSSLSELLGDFLAPLENRSTESPWTFQKGNGTSECYYFHENCFLMGTIAKACLQGSDLLVQQHFRWVQLRWDGEPMQGLLQRFLRRKVVNKFRGQVPSPCDPVCKTVDWALAVWRQLNSCLARLGTPEALLGPKYFLSCPVVPGHAQATVKWMAKLWNAIIAPRVQEAILSRASVKRQPGLGLATAKKHPSQGQQAVVKAALSILLNKAVLHGCPLPRAELDQHAADFRGGSFPLSIVSSYHSYSKKKGESGAWRKVSTSPRKKSGRFSPPSWNKPGLSEEGIRIKAVSQQNCNRNASLSKQKSLENDLSLTLNLDQRLSLGSDDEADLVKELQSMCSSRSESDISKIADSRDDLRRFDGSRNNPAFSTVNPRMPVSPKEVSPLSSHETTECSNSQSKIELGVSRVKSFLPVPRSKVTQCSQNTKRSSSSSNTRQIEINNNTKEDIWNFHQNEQVEKPNQ</sequence>
<organism>
    <name type="scientific">Neofelis nebulosa</name>
    <name type="common">Clouded leopard</name>
    <dbReference type="NCBI Taxonomy" id="61452"/>
    <lineage>
        <taxon>Eukaryota</taxon>
        <taxon>Metazoa</taxon>
        <taxon>Chordata</taxon>
        <taxon>Craniata</taxon>
        <taxon>Vertebrata</taxon>
        <taxon>Euteleostomi</taxon>
        <taxon>Mammalia</taxon>
        <taxon>Eutheria</taxon>
        <taxon>Laurasiatheria</taxon>
        <taxon>Carnivora</taxon>
        <taxon>Feliformia</taxon>
        <taxon>Felidae</taxon>
        <taxon>Pantherinae</taxon>
        <taxon>Neofelis</taxon>
    </lineage>
</organism>
<accession>Q07E28</accession>
<evidence type="ECO:0000250" key="1">
    <source>
        <dbReference type="UniProtKB" id="B9EJA2"/>
    </source>
</evidence>
<evidence type="ECO:0000250" key="2">
    <source>
        <dbReference type="UniProtKB" id="Q2IBD4"/>
    </source>
</evidence>
<evidence type="ECO:0000250" key="3">
    <source>
        <dbReference type="UniProtKB" id="Q8WZ74"/>
    </source>
</evidence>
<evidence type="ECO:0000255" key="4"/>
<evidence type="ECO:0000256" key="5">
    <source>
        <dbReference type="SAM" id="MobiDB-lite"/>
    </source>
</evidence>